<gene>
    <name evidence="1" type="primary">psd</name>
    <name type="ordered locus">VP2825</name>
</gene>
<dbReference type="EC" id="4.1.1.65" evidence="1"/>
<dbReference type="EMBL" id="BA000031">
    <property type="protein sequence ID" value="BAC61088.1"/>
    <property type="molecule type" value="Genomic_DNA"/>
</dbReference>
<dbReference type="RefSeq" id="NP_799204.1">
    <property type="nucleotide sequence ID" value="NC_004603.1"/>
</dbReference>
<dbReference type="SMR" id="Q87KZ9"/>
<dbReference type="GeneID" id="1190388"/>
<dbReference type="KEGG" id="vpa:VP2825"/>
<dbReference type="PATRIC" id="fig|223926.6.peg.2716"/>
<dbReference type="eggNOG" id="COG0688">
    <property type="taxonomic scope" value="Bacteria"/>
</dbReference>
<dbReference type="HOGENOM" id="CLU_029061_4_1_6"/>
<dbReference type="UniPathway" id="UPA00558">
    <property type="reaction ID" value="UER00616"/>
</dbReference>
<dbReference type="Proteomes" id="UP000002493">
    <property type="component" value="Chromosome 1"/>
</dbReference>
<dbReference type="GO" id="GO:0005886">
    <property type="term" value="C:plasma membrane"/>
    <property type="evidence" value="ECO:0007669"/>
    <property type="project" value="UniProtKB-SubCell"/>
</dbReference>
<dbReference type="GO" id="GO:0004609">
    <property type="term" value="F:phosphatidylserine decarboxylase activity"/>
    <property type="evidence" value="ECO:0007669"/>
    <property type="project" value="UniProtKB-UniRule"/>
</dbReference>
<dbReference type="GO" id="GO:0006646">
    <property type="term" value="P:phosphatidylethanolamine biosynthetic process"/>
    <property type="evidence" value="ECO:0007669"/>
    <property type="project" value="UniProtKB-UniRule"/>
</dbReference>
<dbReference type="HAMAP" id="MF_00662">
    <property type="entry name" value="PS_decarb_PSD_B_type1"/>
    <property type="match status" value="1"/>
</dbReference>
<dbReference type="InterPro" id="IPR003817">
    <property type="entry name" value="PS_Dcarbxylase"/>
</dbReference>
<dbReference type="InterPro" id="IPR033177">
    <property type="entry name" value="PSD-B"/>
</dbReference>
<dbReference type="InterPro" id="IPR033178">
    <property type="entry name" value="PSD_type1_pro"/>
</dbReference>
<dbReference type="NCBIfam" id="TIGR00163">
    <property type="entry name" value="PS_decarb"/>
    <property type="match status" value="1"/>
</dbReference>
<dbReference type="PANTHER" id="PTHR10067">
    <property type="entry name" value="PHOSPHATIDYLSERINE DECARBOXYLASE"/>
    <property type="match status" value="1"/>
</dbReference>
<dbReference type="PANTHER" id="PTHR10067:SF6">
    <property type="entry name" value="PHOSPHATIDYLSERINE DECARBOXYLASE PROENZYME, MITOCHONDRIAL"/>
    <property type="match status" value="1"/>
</dbReference>
<dbReference type="Pfam" id="PF02666">
    <property type="entry name" value="PS_Dcarbxylase"/>
    <property type="match status" value="1"/>
</dbReference>
<protein>
    <recommendedName>
        <fullName evidence="1">Phosphatidylserine decarboxylase proenzyme</fullName>
        <ecNumber evidence="1">4.1.1.65</ecNumber>
    </recommendedName>
    <component>
        <recommendedName>
            <fullName evidence="1">Phosphatidylserine decarboxylase alpha chain</fullName>
        </recommendedName>
    </component>
    <component>
        <recommendedName>
            <fullName evidence="1">Phosphatidylserine decarboxylase beta chain</fullName>
        </recommendedName>
    </component>
</protein>
<sequence>MDKIKVGLQYWIPQHGLTRLVGKLASAKAGSLTTAVIRWFIKQYNVNMDEAKHSDPKHFKTFNEFFVRELKEGARPITEGDEIITHPADACVSQFGPIEDGQLIQAKGHNYSAQELLGGDEKLAEEFKDGSFATLYLSPRDYHRVHMPCDGTLRQMIYVPGDLFSVNPLTAENVPNLFARNERVVCIFDTEFGPMAQVLVGATIVGSIEQVWAGTITPPRGNTVYKWDYPAEGDKAVILKKGEEMGRFKLGSTVINLFAKDAIEFDVSMENGQPTVMGTPYALKK</sequence>
<name>PSD_VIBPA</name>
<keyword id="KW-1003">Cell membrane</keyword>
<keyword id="KW-0210">Decarboxylase</keyword>
<keyword id="KW-0444">Lipid biosynthesis</keyword>
<keyword id="KW-0443">Lipid metabolism</keyword>
<keyword id="KW-0456">Lyase</keyword>
<keyword id="KW-0472">Membrane</keyword>
<keyword id="KW-0594">Phospholipid biosynthesis</keyword>
<keyword id="KW-1208">Phospholipid metabolism</keyword>
<keyword id="KW-0670">Pyruvate</keyword>
<keyword id="KW-0865">Zymogen</keyword>
<comment type="function">
    <text evidence="1">Catalyzes the formation of phosphatidylethanolamine (PtdEtn) from phosphatidylserine (PtdSer).</text>
</comment>
<comment type="catalytic activity">
    <reaction evidence="1">
        <text>a 1,2-diacyl-sn-glycero-3-phospho-L-serine + H(+) = a 1,2-diacyl-sn-glycero-3-phosphoethanolamine + CO2</text>
        <dbReference type="Rhea" id="RHEA:20828"/>
        <dbReference type="ChEBI" id="CHEBI:15378"/>
        <dbReference type="ChEBI" id="CHEBI:16526"/>
        <dbReference type="ChEBI" id="CHEBI:57262"/>
        <dbReference type="ChEBI" id="CHEBI:64612"/>
        <dbReference type="EC" id="4.1.1.65"/>
    </reaction>
</comment>
<comment type="cofactor">
    <cofactor evidence="1">
        <name>pyruvate</name>
        <dbReference type="ChEBI" id="CHEBI:15361"/>
    </cofactor>
    <text evidence="1">Binds 1 pyruvoyl group covalently per subunit.</text>
</comment>
<comment type="pathway">
    <text evidence="1">Phospholipid metabolism; phosphatidylethanolamine biosynthesis; phosphatidylethanolamine from CDP-diacylglycerol: step 2/2.</text>
</comment>
<comment type="subunit">
    <text evidence="1">Heterodimer of a large membrane-associated beta subunit and a small pyruvoyl-containing alpha subunit.</text>
</comment>
<comment type="subcellular location">
    <subcellularLocation>
        <location evidence="1">Cell membrane</location>
        <topology evidence="1">Peripheral membrane protein</topology>
    </subcellularLocation>
</comment>
<comment type="PTM">
    <text evidence="1">Is synthesized initially as an inactive proenzyme. Formation of the active enzyme involves a self-maturation process in which the active site pyruvoyl group is generated from an internal serine residue via an autocatalytic post-translational modification. Two non-identical subunits are generated from the proenzyme in this reaction, and the pyruvate is formed at the N-terminus of the alpha chain, which is derived from the carboxyl end of the proenzyme. The autoendoproteolytic cleavage occurs by a canonical serine protease mechanism, in which the side chain hydroxyl group of the serine supplies its oxygen atom to form the C-terminus of the beta chain, while the remainder of the serine residue undergoes an oxidative deamination to produce ammonia and the pyruvoyl prosthetic group on the alpha chain. During this reaction, the Ser that is part of the protease active site of the proenzyme becomes the pyruvoyl prosthetic group, which constitutes an essential element of the active site of the mature decarboxylase.</text>
</comment>
<comment type="similarity">
    <text evidence="1">Belongs to the phosphatidylserine decarboxylase family. PSD-B subfamily. Prokaryotic type I sub-subfamily.</text>
</comment>
<evidence type="ECO:0000255" key="1">
    <source>
        <dbReference type="HAMAP-Rule" id="MF_00662"/>
    </source>
</evidence>
<organism>
    <name type="scientific">Vibrio parahaemolyticus serotype O3:K6 (strain RIMD 2210633)</name>
    <dbReference type="NCBI Taxonomy" id="223926"/>
    <lineage>
        <taxon>Bacteria</taxon>
        <taxon>Pseudomonadati</taxon>
        <taxon>Pseudomonadota</taxon>
        <taxon>Gammaproteobacteria</taxon>
        <taxon>Vibrionales</taxon>
        <taxon>Vibrionaceae</taxon>
        <taxon>Vibrio</taxon>
    </lineage>
</organism>
<proteinExistence type="inferred from homology"/>
<accession>Q87KZ9</accession>
<feature type="chain" id="PRO_0000029705" description="Phosphatidylserine decarboxylase beta chain" evidence="1">
    <location>
        <begin position="1"/>
        <end position="251"/>
    </location>
</feature>
<feature type="chain" id="PRO_0000029706" description="Phosphatidylserine decarboxylase alpha chain" evidence="1">
    <location>
        <begin position="252"/>
        <end position="285"/>
    </location>
</feature>
<feature type="active site" description="Charge relay system; for autoendoproteolytic cleavage activity" evidence="1">
    <location>
        <position position="89"/>
    </location>
</feature>
<feature type="active site" description="Charge relay system; for autoendoproteolytic cleavage activity" evidence="1">
    <location>
        <position position="146"/>
    </location>
</feature>
<feature type="active site" description="Charge relay system; for autoendoproteolytic cleavage activity" evidence="1">
    <location>
        <position position="252"/>
    </location>
</feature>
<feature type="active site" description="Schiff-base intermediate with substrate; via pyruvic acid; for decarboxylase activity" evidence="1">
    <location>
        <position position="252"/>
    </location>
</feature>
<feature type="site" description="Cleavage (non-hydrolytic); by autocatalysis" evidence="1">
    <location>
        <begin position="251"/>
        <end position="252"/>
    </location>
</feature>
<feature type="modified residue" description="Pyruvic acid (Ser); by autocatalysis" evidence="1">
    <location>
        <position position="252"/>
    </location>
</feature>
<reference key="1">
    <citation type="journal article" date="2003" name="Lancet">
        <title>Genome sequence of Vibrio parahaemolyticus: a pathogenic mechanism distinct from that of V. cholerae.</title>
        <authorList>
            <person name="Makino K."/>
            <person name="Oshima K."/>
            <person name="Kurokawa K."/>
            <person name="Yokoyama K."/>
            <person name="Uda T."/>
            <person name="Tagomori K."/>
            <person name="Iijima Y."/>
            <person name="Najima M."/>
            <person name="Nakano M."/>
            <person name="Yamashita A."/>
            <person name="Kubota Y."/>
            <person name="Kimura S."/>
            <person name="Yasunaga T."/>
            <person name="Honda T."/>
            <person name="Shinagawa H."/>
            <person name="Hattori M."/>
            <person name="Iida T."/>
        </authorList>
    </citation>
    <scope>NUCLEOTIDE SEQUENCE [LARGE SCALE GENOMIC DNA]</scope>
    <source>
        <strain>RIMD 2210633</strain>
    </source>
</reference>